<sequence length="434" mass="47251">MAIIAIHARQIFDSRGNPTVEVDLKTAKGLFRAAVPSGASTGVHEALELRDTNSKAYMCKGVLTAVSNVNNIIAPALLKKQIPVTNQSEVDQFMIELDGKENKGNLGANAILGVSLAVCKAGAAELNLPLYRYIAKLAGHKDVIMPVPAFNVINGGSHAGNKLAMQEFMILPTGASSFTEAMQMGSEVYHNLKAVIKREFGLDACNVGDEGGFAPNIQDNMKGLQLLEEAIKIAGYTGKVEIGMDCAASEYYKKGKYDLDFKNPQSAESHWLSPDEMANVYKEMIQKYPIVSIEDPFDQDDWDAWPKLTASTNIQIVGDDLTVTNPKRIEKAIKVKACNCLLLKVNQIGSITESIEACKMAQKAGWGVMVSHRSGETEDNFIADLVVGLCTGQIKTGAPCRSERLAKYNQLLRIEEELGSTAKYAGKHFRHPQI</sequence>
<feature type="chain" id="PRO_0000134083" description="Enolase">
    <location>
        <begin position="1"/>
        <end position="434"/>
    </location>
</feature>
<feature type="active site" description="Proton donor" evidence="1">
    <location>
        <position position="210"/>
    </location>
</feature>
<feature type="active site" description="Proton acceptor" evidence="1">
    <location>
        <position position="344"/>
    </location>
</feature>
<feature type="binding site" evidence="1">
    <location>
        <position position="158"/>
    </location>
    <ligand>
        <name>substrate</name>
    </ligand>
</feature>
<feature type="binding site" evidence="1">
    <location>
        <position position="167"/>
    </location>
    <ligand>
        <name>substrate</name>
    </ligand>
</feature>
<feature type="binding site" evidence="1">
    <location>
        <position position="245"/>
    </location>
    <ligand>
        <name>Mg(2+)</name>
        <dbReference type="ChEBI" id="CHEBI:18420"/>
    </ligand>
</feature>
<feature type="binding site" evidence="1">
    <location>
        <position position="294"/>
    </location>
    <ligand>
        <name>Mg(2+)</name>
        <dbReference type="ChEBI" id="CHEBI:18420"/>
    </ligand>
</feature>
<feature type="binding site" evidence="1">
    <location>
        <position position="294"/>
    </location>
    <ligand>
        <name>substrate</name>
    </ligand>
</feature>
<feature type="binding site" evidence="1">
    <location>
        <position position="319"/>
    </location>
    <ligand>
        <name>Mg(2+)</name>
        <dbReference type="ChEBI" id="CHEBI:18420"/>
    </ligand>
</feature>
<feature type="binding site" evidence="1">
    <location>
        <position position="319"/>
    </location>
    <ligand>
        <name>substrate</name>
    </ligand>
</feature>
<feature type="binding site" evidence="1">
    <location>
        <begin position="371"/>
        <end position="374"/>
    </location>
    <ligand>
        <name>substrate</name>
    </ligand>
</feature>
<feature type="binding site" evidence="1">
    <location>
        <position position="395"/>
    </location>
    <ligand>
        <name>substrate</name>
    </ligand>
</feature>
<organism>
    <name type="scientific">Schistosoma japonicum</name>
    <name type="common">Blood fluke</name>
    <dbReference type="NCBI Taxonomy" id="6182"/>
    <lineage>
        <taxon>Eukaryota</taxon>
        <taxon>Metazoa</taxon>
        <taxon>Spiralia</taxon>
        <taxon>Lophotrochozoa</taxon>
        <taxon>Platyhelminthes</taxon>
        <taxon>Trematoda</taxon>
        <taxon>Digenea</taxon>
        <taxon>Strigeidida</taxon>
        <taxon>Schistosomatoidea</taxon>
        <taxon>Schistosomatidae</taxon>
        <taxon>Schistosoma</taxon>
    </lineage>
</organism>
<evidence type="ECO:0000250" key="1"/>
<evidence type="ECO:0000305" key="2"/>
<proteinExistence type="evidence at transcript level"/>
<name>ENO_SCHJA</name>
<reference key="1">
    <citation type="journal article" date="1993" name="Biochem. Biophys. Res. Commun.">
        <title>Cloning and functional expression of a Schistosoma japonicum cDNA homologous to the enolase gene family.</title>
        <authorList>
            <person name="Waine G.J."/>
            <person name="Becker M."/>
            <person name="Kalinna B.H."/>
            <person name="Yang W."/>
            <person name="McManus D.P."/>
        </authorList>
    </citation>
    <scope>NUCLEOTIDE SEQUENCE [MRNA]</scope>
    <source>
        <strain>Chinese</strain>
    </source>
</reference>
<comment type="catalytic activity">
    <reaction>
        <text>(2R)-2-phosphoglycerate = phosphoenolpyruvate + H2O</text>
        <dbReference type="Rhea" id="RHEA:10164"/>
        <dbReference type="ChEBI" id="CHEBI:15377"/>
        <dbReference type="ChEBI" id="CHEBI:58289"/>
        <dbReference type="ChEBI" id="CHEBI:58702"/>
        <dbReference type="EC" id="4.2.1.11"/>
    </reaction>
</comment>
<comment type="cofactor">
    <cofactor evidence="1">
        <name>Mg(2+)</name>
        <dbReference type="ChEBI" id="CHEBI:18420"/>
    </cofactor>
    <text evidence="1">Mg(2+) is required for catalysis and for stabilizing the dimer.</text>
</comment>
<comment type="pathway">
    <text>Carbohydrate degradation; glycolysis; pyruvate from D-glyceraldehyde 3-phosphate: step 4/5.</text>
</comment>
<comment type="subunit">
    <text evidence="1">Homodimer.</text>
</comment>
<comment type="subcellular location">
    <subcellularLocation>
        <location>Cytoplasm</location>
    </subcellularLocation>
</comment>
<comment type="similarity">
    <text evidence="2">Belongs to the enolase family.</text>
</comment>
<gene>
    <name type="primary">ENO</name>
</gene>
<protein>
    <recommendedName>
        <fullName>Enolase</fullName>
        <ecNumber>4.2.1.11</ecNumber>
    </recommendedName>
    <alternativeName>
        <fullName>2-phospho-D-glycerate hydro-lyase</fullName>
    </alternativeName>
    <alternativeName>
        <fullName>2-phosphoglycerate dehydratase</fullName>
    </alternativeName>
</protein>
<accession>P33676</accession>
<keyword id="KW-0963">Cytoplasm</keyword>
<keyword id="KW-0324">Glycolysis</keyword>
<keyword id="KW-0456">Lyase</keyword>
<keyword id="KW-0460">Magnesium</keyword>
<keyword id="KW-0479">Metal-binding</keyword>
<dbReference type="EC" id="4.2.1.11"/>
<dbReference type="EMBL" id="L23324">
    <property type="protein sequence ID" value="AAA29874.1"/>
    <property type="molecule type" value="mRNA"/>
</dbReference>
<dbReference type="SMR" id="P33676"/>
<dbReference type="OrthoDB" id="1739814at2759"/>
<dbReference type="UniPathway" id="UPA00109">
    <property type="reaction ID" value="UER00187"/>
</dbReference>
<dbReference type="GO" id="GO:0000015">
    <property type="term" value="C:phosphopyruvate hydratase complex"/>
    <property type="evidence" value="ECO:0007669"/>
    <property type="project" value="InterPro"/>
</dbReference>
<dbReference type="GO" id="GO:0000287">
    <property type="term" value="F:magnesium ion binding"/>
    <property type="evidence" value="ECO:0007669"/>
    <property type="project" value="InterPro"/>
</dbReference>
<dbReference type="GO" id="GO:0004634">
    <property type="term" value="F:phosphopyruvate hydratase activity"/>
    <property type="evidence" value="ECO:0007669"/>
    <property type="project" value="UniProtKB-EC"/>
</dbReference>
<dbReference type="GO" id="GO:0006096">
    <property type="term" value="P:glycolytic process"/>
    <property type="evidence" value="ECO:0007669"/>
    <property type="project" value="UniProtKB-UniPathway"/>
</dbReference>
<dbReference type="CDD" id="cd03313">
    <property type="entry name" value="enolase"/>
    <property type="match status" value="1"/>
</dbReference>
<dbReference type="FunFam" id="3.30.390.10:FF:000001">
    <property type="entry name" value="Enolase"/>
    <property type="match status" value="1"/>
</dbReference>
<dbReference type="FunFam" id="3.20.20.120:FF:000002">
    <property type="entry name" value="Enolase 1"/>
    <property type="match status" value="1"/>
</dbReference>
<dbReference type="Gene3D" id="3.20.20.120">
    <property type="entry name" value="Enolase-like C-terminal domain"/>
    <property type="match status" value="1"/>
</dbReference>
<dbReference type="Gene3D" id="3.30.390.10">
    <property type="entry name" value="Enolase-like, N-terminal domain"/>
    <property type="match status" value="1"/>
</dbReference>
<dbReference type="HAMAP" id="MF_00318">
    <property type="entry name" value="Enolase"/>
    <property type="match status" value="1"/>
</dbReference>
<dbReference type="InterPro" id="IPR000941">
    <property type="entry name" value="Enolase"/>
</dbReference>
<dbReference type="InterPro" id="IPR036849">
    <property type="entry name" value="Enolase-like_C_sf"/>
</dbReference>
<dbReference type="InterPro" id="IPR029017">
    <property type="entry name" value="Enolase-like_N"/>
</dbReference>
<dbReference type="InterPro" id="IPR020810">
    <property type="entry name" value="Enolase_C"/>
</dbReference>
<dbReference type="InterPro" id="IPR020809">
    <property type="entry name" value="Enolase_CS"/>
</dbReference>
<dbReference type="InterPro" id="IPR020811">
    <property type="entry name" value="Enolase_N"/>
</dbReference>
<dbReference type="NCBIfam" id="TIGR01060">
    <property type="entry name" value="eno"/>
    <property type="match status" value="1"/>
</dbReference>
<dbReference type="PANTHER" id="PTHR11902">
    <property type="entry name" value="ENOLASE"/>
    <property type="match status" value="1"/>
</dbReference>
<dbReference type="PANTHER" id="PTHR11902:SF1">
    <property type="entry name" value="ENOLASE"/>
    <property type="match status" value="1"/>
</dbReference>
<dbReference type="Pfam" id="PF00113">
    <property type="entry name" value="Enolase_C"/>
    <property type="match status" value="1"/>
</dbReference>
<dbReference type="Pfam" id="PF03952">
    <property type="entry name" value="Enolase_N"/>
    <property type="match status" value="1"/>
</dbReference>
<dbReference type="PIRSF" id="PIRSF001400">
    <property type="entry name" value="Enolase"/>
    <property type="match status" value="1"/>
</dbReference>
<dbReference type="PRINTS" id="PR00148">
    <property type="entry name" value="ENOLASE"/>
</dbReference>
<dbReference type="SFLD" id="SFLDS00001">
    <property type="entry name" value="Enolase"/>
    <property type="match status" value="1"/>
</dbReference>
<dbReference type="SFLD" id="SFLDF00002">
    <property type="entry name" value="enolase"/>
    <property type="match status" value="1"/>
</dbReference>
<dbReference type="SMART" id="SM01192">
    <property type="entry name" value="Enolase_C"/>
    <property type="match status" value="1"/>
</dbReference>
<dbReference type="SMART" id="SM01193">
    <property type="entry name" value="Enolase_N"/>
    <property type="match status" value="1"/>
</dbReference>
<dbReference type="SUPFAM" id="SSF51604">
    <property type="entry name" value="Enolase C-terminal domain-like"/>
    <property type="match status" value="1"/>
</dbReference>
<dbReference type="SUPFAM" id="SSF54826">
    <property type="entry name" value="Enolase N-terminal domain-like"/>
    <property type="match status" value="1"/>
</dbReference>
<dbReference type="PROSITE" id="PS00164">
    <property type="entry name" value="ENOLASE"/>
    <property type="match status" value="1"/>
</dbReference>